<name>KU_ALLAM</name>
<proteinExistence type="inferred from homology"/>
<geneLocation type="plasmid">
    <name>pTiS4</name>
</geneLocation>
<feature type="chain" id="PRO_0000389173" description="Non-homologous end joining protein Ku">
    <location>
        <begin position="1"/>
        <end position="273"/>
    </location>
</feature>
<feature type="domain" description="Ku" evidence="1">
    <location>
        <begin position="13"/>
        <end position="190"/>
    </location>
</feature>
<feature type="region of interest" description="Disordered" evidence="2">
    <location>
        <begin position="227"/>
        <end position="251"/>
    </location>
</feature>
<feature type="compositionally biased region" description="Basic residues" evidence="2">
    <location>
        <begin position="228"/>
        <end position="240"/>
    </location>
</feature>
<accession>B9K4A6</accession>
<keyword id="KW-0227">DNA damage</keyword>
<keyword id="KW-0233">DNA recombination</keyword>
<keyword id="KW-0234">DNA repair</keyword>
<keyword id="KW-0238">DNA-binding</keyword>
<keyword id="KW-0614">Plasmid</keyword>
<keyword id="KW-1185">Reference proteome</keyword>
<comment type="function">
    <text evidence="1">With LigD forms a non-homologous end joining (NHEJ) DNA repair enzyme, which repairs dsDNA breaks with reduced fidelity. Binds linear dsDNA with 5'- and 3'- overhangs but not closed circular dsDNA nor ssDNA. Recruits and stimulates the ligase activity of LigD.</text>
</comment>
<comment type="subunit">
    <text evidence="1">Homodimer. Interacts with LigD.</text>
</comment>
<comment type="similarity">
    <text evidence="1">Belongs to the prokaryotic Ku family.</text>
</comment>
<organism>
    <name type="scientific">Allorhizobium ampelinum (strain ATCC BAA-846 / DSM 112012 / S4)</name>
    <name type="common">Agrobacterium vitis (strain S4)</name>
    <dbReference type="NCBI Taxonomy" id="311402"/>
    <lineage>
        <taxon>Bacteria</taxon>
        <taxon>Pseudomonadati</taxon>
        <taxon>Pseudomonadota</taxon>
        <taxon>Alphaproteobacteria</taxon>
        <taxon>Hyphomicrobiales</taxon>
        <taxon>Rhizobiaceae</taxon>
        <taxon>Rhizobium/Agrobacterium group</taxon>
        <taxon>Allorhizobium</taxon>
        <taxon>Allorhizobium ampelinum</taxon>
    </lineage>
</organism>
<dbReference type="EMBL" id="CP000637">
    <property type="protein sequence ID" value="ACM39556.1"/>
    <property type="molecule type" value="Genomic_DNA"/>
</dbReference>
<dbReference type="RefSeq" id="WP_012648923.1">
    <property type="nucleotide sequence ID" value="NC_011982.1"/>
</dbReference>
<dbReference type="SMR" id="B9K4A6"/>
<dbReference type="KEGG" id="avi:Avi_8016"/>
<dbReference type="HOGENOM" id="CLU_048975_0_0_5"/>
<dbReference type="Proteomes" id="UP000001596">
    <property type="component" value="Plasmid pTiS4"/>
</dbReference>
<dbReference type="GO" id="GO:0003690">
    <property type="term" value="F:double-stranded DNA binding"/>
    <property type="evidence" value="ECO:0007669"/>
    <property type="project" value="UniProtKB-UniRule"/>
</dbReference>
<dbReference type="GO" id="GO:0006310">
    <property type="term" value="P:DNA recombination"/>
    <property type="evidence" value="ECO:0007669"/>
    <property type="project" value="UniProtKB-KW"/>
</dbReference>
<dbReference type="GO" id="GO:0006303">
    <property type="term" value="P:double-strand break repair via nonhomologous end joining"/>
    <property type="evidence" value="ECO:0007669"/>
    <property type="project" value="UniProtKB-UniRule"/>
</dbReference>
<dbReference type="Gene3D" id="2.40.290.10">
    <property type="match status" value="1"/>
</dbReference>
<dbReference type="HAMAP" id="MF_01875">
    <property type="entry name" value="Prokaryotic_Ku"/>
    <property type="match status" value="1"/>
</dbReference>
<dbReference type="InterPro" id="IPR006164">
    <property type="entry name" value="Ku70/Ku80_beta-barrel_dom"/>
</dbReference>
<dbReference type="InterPro" id="IPR009187">
    <property type="entry name" value="Prok_Ku"/>
</dbReference>
<dbReference type="InterPro" id="IPR016194">
    <property type="entry name" value="SPOC-like_C_dom_sf"/>
</dbReference>
<dbReference type="NCBIfam" id="TIGR02772">
    <property type="entry name" value="Ku_bact"/>
    <property type="match status" value="1"/>
</dbReference>
<dbReference type="PANTHER" id="PTHR41251">
    <property type="entry name" value="NON-HOMOLOGOUS END JOINING PROTEIN KU"/>
    <property type="match status" value="1"/>
</dbReference>
<dbReference type="PANTHER" id="PTHR41251:SF1">
    <property type="entry name" value="NON-HOMOLOGOUS END JOINING PROTEIN KU"/>
    <property type="match status" value="1"/>
</dbReference>
<dbReference type="Pfam" id="PF02735">
    <property type="entry name" value="Ku"/>
    <property type="match status" value="1"/>
</dbReference>
<dbReference type="PIRSF" id="PIRSF006493">
    <property type="entry name" value="Prok_Ku"/>
    <property type="match status" value="1"/>
</dbReference>
<dbReference type="SMART" id="SM00559">
    <property type="entry name" value="Ku78"/>
    <property type="match status" value="1"/>
</dbReference>
<dbReference type="SUPFAM" id="SSF100939">
    <property type="entry name" value="SPOC domain-like"/>
    <property type="match status" value="1"/>
</dbReference>
<evidence type="ECO:0000255" key="1">
    <source>
        <dbReference type="HAMAP-Rule" id="MF_01875"/>
    </source>
</evidence>
<evidence type="ECO:0000256" key="2">
    <source>
        <dbReference type="SAM" id="MobiDB-lite"/>
    </source>
</evidence>
<protein>
    <recommendedName>
        <fullName evidence="1">Non-homologous end joining protein Ku</fullName>
    </recommendedName>
</protein>
<reference key="1">
    <citation type="journal article" date="2009" name="J. Bacteriol.">
        <title>Genome sequences of three Agrobacterium biovars help elucidate the evolution of multichromosome genomes in bacteria.</title>
        <authorList>
            <person name="Slater S.C."/>
            <person name="Goldman B.S."/>
            <person name="Goodner B."/>
            <person name="Setubal J.C."/>
            <person name="Farrand S.K."/>
            <person name="Nester E.W."/>
            <person name="Burr T.J."/>
            <person name="Banta L."/>
            <person name="Dickerman A.W."/>
            <person name="Paulsen I."/>
            <person name="Otten L."/>
            <person name="Suen G."/>
            <person name="Welch R."/>
            <person name="Almeida N.F."/>
            <person name="Arnold F."/>
            <person name="Burton O.T."/>
            <person name="Du Z."/>
            <person name="Ewing A."/>
            <person name="Godsy E."/>
            <person name="Heisel S."/>
            <person name="Houmiel K.L."/>
            <person name="Jhaveri J."/>
            <person name="Lu J."/>
            <person name="Miller N.M."/>
            <person name="Norton S."/>
            <person name="Chen Q."/>
            <person name="Phoolcharoen W."/>
            <person name="Ohlin V."/>
            <person name="Ondrusek D."/>
            <person name="Pride N."/>
            <person name="Stricklin S.L."/>
            <person name="Sun J."/>
            <person name="Wheeler C."/>
            <person name="Wilson L."/>
            <person name="Zhu H."/>
            <person name="Wood D.W."/>
        </authorList>
    </citation>
    <scope>NUCLEOTIDE SEQUENCE [LARGE SCALE GENOMIC DNA]</scope>
    <source>
        <strain>ATCC BAA-846 / DSM 112012 / S4</strain>
    </source>
</reference>
<sequence length="273" mass="30683">MAPRRPYWRGYLKLSLVTCPVAMTPATSESEKVRFHTLNKDTGNRVVSHYVDSVTGKPVKDEQEAKGYERGENDYVLLTDEDLESVELETVRTIDIEKFIPRGSIEWVYLETPFYLTANDKIGDEAFAVIRQAMEAEDVVGVSRVVLGRRERAVVLEPRGEGIVVWTLRFGDEVRPESEYFTGIEKKSDAKGVSAVEAVIKKRMQDWSPEMVSDPIQESLLKLIADKKKAKKPSKAKASKSTKGDDEEKSNVVNIMDALKKSVAKELKSRKAG</sequence>
<gene>
    <name evidence="1" type="primary">ku</name>
    <name type="ordered locus">Avi_8016</name>
</gene>